<proteinExistence type="inferred from homology"/>
<comment type="catalytic activity">
    <reaction evidence="2">
        <text>L-seryl-[protein] + ATP = O-phospho-L-seryl-[protein] + ADP + H(+)</text>
        <dbReference type="Rhea" id="RHEA:17989"/>
        <dbReference type="Rhea" id="RHEA-COMP:9863"/>
        <dbReference type="Rhea" id="RHEA-COMP:11604"/>
        <dbReference type="ChEBI" id="CHEBI:15378"/>
        <dbReference type="ChEBI" id="CHEBI:29999"/>
        <dbReference type="ChEBI" id="CHEBI:30616"/>
        <dbReference type="ChEBI" id="CHEBI:83421"/>
        <dbReference type="ChEBI" id="CHEBI:456216"/>
        <dbReference type="EC" id="2.7.11.1"/>
    </reaction>
</comment>
<comment type="catalytic activity">
    <reaction evidence="2">
        <text>L-threonyl-[protein] + ATP = O-phospho-L-threonyl-[protein] + ADP + H(+)</text>
        <dbReference type="Rhea" id="RHEA:46608"/>
        <dbReference type="Rhea" id="RHEA-COMP:11060"/>
        <dbReference type="Rhea" id="RHEA-COMP:11605"/>
        <dbReference type="ChEBI" id="CHEBI:15378"/>
        <dbReference type="ChEBI" id="CHEBI:30013"/>
        <dbReference type="ChEBI" id="CHEBI:30616"/>
        <dbReference type="ChEBI" id="CHEBI:61977"/>
        <dbReference type="ChEBI" id="CHEBI:456216"/>
        <dbReference type="EC" id="2.7.11.1"/>
    </reaction>
</comment>
<comment type="cofactor">
    <cofactor evidence="2">
        <name>Mg(2+)</name>
        <dbReference type="ChEBI" id="CHEBI:18420"/>
    </cofactor>
</comment>
<comment type="similarity">
    <text evidence="3">Belongs to the protein kinase superfamily. Ser/Thr protein kinase family.</text>
</comment>
<dbReference type="EC" id="2.7.11.1"/>
<dbReference type="EMBL" id="AAFI02000003">
    <property type="protein sequence ID" value="EAL73728.1"/>
    <property type="molecule type" value="Genomic_DNA"/>
</dbReference>
<dbReference type="RefSeq" id="XP_647428.1">
    <property type="nucleotide sequence ID" value="XM_642336.1"/>
</dbReference>
<dbReference type="SMR" id="Q55FV5"/>
<dbReference type="FunCoup" id="Q55FV5">
    <property type="interactions" value="640"/>
</dbReference>
<dbReference type="STRING" id="44689.Q55FV5"/>
<dbReference type="PaxDb" id="44689-DDB0230002"/>
<dbReference type="EnsemblProtists" id="EAL73728">
    <property type="protein sequence ID" value="EAL73728"/>
    <property type="gene ID" value="DDB_G0268550"/>
</dbReference>
<dbReference type="GeneID" id="8616235"/>
<dbReference type="KEGG" id="ddi:DDB_G0268550"/>
<dbReference type="dictyBase" id="DDB_G0268550"/>
<dbReference type="VEuPathDB" id="AmoebaDB:DDB_G0268550"/>
<dbReference type="eggNOG" id="KOG0576">
    <property type="taxonomic scope" value="Eukaryota"/>
</dbReference>
<dbReference type="HOGENOM" id="CLU_508482_0_0_1"/>
<dbReference type="InParanoid" id="Q55FV5"/>
<dbReference type="PhylomeDB" id="Q55FV5"/>
<dbReference type="PRO" id="PR:Q55FV5"/>
<dbReference type="Proteomes" id="UP000002195">
    <property type="component" value="Chromosome 1"/>
</dbReference>
<dbReference type="GO" id="GO:0005737">
    <property type="term" value="C:cytoplasm"/>
    <property type="evidence" value="ECO:0000318"/>
    <property type="project" value="GO_Central"/>
</dbReference>
<dbReference type="GO" id="GO:0005524">
    <property type="term" value="F:ATP binding"/>
    <property type="evidence" value="ECO:0007669"/>
    <property type="project" value="UniProtKB-KW"/>
</dbReference>
<dbReference type="GO" id="GO:0046872">
    <property type="term" value="F:metal ion binding"/>
    <property type="evidence" value="ECO:0007669"/>
    <property type="project" value="UniProtKB-KW"/>
</dbReference>
<dbReference type="GO" id="GO:0106310">
    <property type="term" value="F:protein serine kinase activity"/>
    <property type="evidence" value="ECO:0007669"/>
    <property type="project" value="RHEA"/>
</dbReference>
<dbReference type="GO" id="GO:0004674">
    <property type="term" value="F:protein serine/threonine kinase activity"/>
    <property type="evidence" value="ECO:0000318"/>
    <property type="project" value="GO_Central"/>
</dbReference>
<dbReference type="GO" id="GO:0007165">
    <property type="term" value="P:signal transduction"/>
    <property type="evidence" value="ECO:0000318"/>
    <property type="project" value="GO_Central"/>
</dbReference>
<dbReference type="Gene3D" id="1.10.510.10">
    <property type="entry name" value="Transferase(Phosphotransferase) domain 1"/>
    <property type="match status" value="2"/>
</dbReference>
<dbReference type="InterPro" id="IPR011009">
    <property type="entry name" value="Kinase-like_dom_sf"/>
</dbReference>
<dbReference type="InterPro" id="IPR000719">
    <property type="entry name" value="Prot_kinase_dom"/>
</dbReference>
<dbReference type="InterPro" id="IPR008271">
    <property type="entry name" value="Ser/Thr_kinase_AS"/>
</dbReference>
<dbReference type="InterPro" id="IPR053235">
    <property type="entry name" value="Ser_Thr_kinase"/>
</dbReference>
<dbReference type="PANTHER" id="PTHR24361">
    <property type="entry name" value="MITOGEN-ACTIVATED KINASE KINASE KINASE"/>
    <property type="match status" value="1"/>
</dbReference>
<dbReference type="Pfam" id="PF00069">
    <property type="entry name" value="Pkinase"/>
    <property type="match status" value="1"/>
</dbReference>
<dbReference type="SMART" id="SM00220">
    <property type="entry name" value="S_TKc"/>
    <property type="match status" value="1"/>
</dbReference>
<dbReference type="SUPFAM" id="SSF56112">
    <property type="entry name" value="Protein kinase-like (PK-like)"/>
    <property type="match status" value="1"/>
</dbReference>
<dbReference type="PROSITE" id="PS50011">
    <property type="entry name" value="PROTEIN_KINASE_DOM"/>
    <property type="match status" value="1"/>
</dbReference>
<dbReference type="PROSITE" id="PS00108">
    <property type="entry name" value="PROTEIN_KINASE_ST"/>
    <property type="match status" value="1"/>
</dbReference>
<accession>Q55FV5</accession>
<reference evidence="6" key="1">
    <citation type="journal article" date="2005" name="Nature">
        <title>The genome of the social amoeba Dictyostelium discoideum.</title>
        <authorList>
            <person name="Eichinger L."/>
            <person name="Pachebat J.A."/>
            <person name="Gloeckner G."/>
            <person name="Rajandream M.A."/>
            <person name="Sucgang R."/>
            <person name="Berriman M."/>
            <person name="Song J."/>
            <person name="Olsen R."/>
            <person name="Szafranski K."/>
            <person name="Xu Q."/>
            <person name="Tunggal B."/>
            <person name="Kummerfeld S."/>
            <person name="Madera M."/>
            <person name="Konfortov B.A."/>
            <person name="Rivero F."/>
            <person name="Bankier A.T."/>
            <person name="Lehmann R."/>
            <person name="Hamlin N."/>
            <person name="Davies R."/>
            <person name="Gaudet P."/>
            <person name="Fey P."/>
            <person name="Pilcher K."/>
            <person name="Chen G."/>
            <person name="Saunders D."/>
            <person name="Sodergren E.J."/>
            <person name="Davis P."/>
            <person name="Kerhornou A."/>
            <person name="Nie X."/>
            <person name="Hall N."/>
            <person name="Anjard C."/>
            <person name="Hemphill L."/>
            <person name="Bason N."/>
            <person name="Farbrother P."/>
            <person name="Desany B."/>
            <person name="Just E."/>
            <person name="Morio T."/>
            <person name="Rost R."/>
            <person name="Churcher C.M."/>
            <person name="Cooper J."/>
            <person name="Haydock S."/>
            <person name="van Driessche N."/>
            <person name="Cronin A."/>
            <person name="Goodhead I."/>
            <person name="Muzny D.M."/>
            <person name="Mourier T."/>
            <person name="Pain A."/>
            <person name="Lu M."/>
            <person name="Harper D."/>
            <person name="Lindsay R."/>
            <person name="Hauser H."/>
            <person name="James K.D."/>
            <person name="Quiles M."/>
            <person name="Madan Babu M."/>
            <person name="Saito T."/>
            <person name="Buchrieser C."/>
            <person name="Wardroper A."/>
            <person name="Felder M."/>
            <person name="Thangavelu M."/>
            <person name="Johnson D."/>
            <person name="Knights A."/>
            <person name="Loulseged H."/>
            <person name="Mungall K.L."/>
            <person name="Oliver K."/>
            <person name="Price C."/>
            <person name="Quail M.A."/>
            <person name="Urushihara H."/>
            <person name="Hernandez J."/>
            <person name="Rabbinowitsch E."/>
            <person name="Steffen D."/>
            <person name="Sanders M."/>
            <person name="Ma J."/>
            <person name="Kohara Y."/>
            <person name="Sharp S."/>
            <person name="Simmonds M.N."/>
            <person name="Spiegler S."/>
            <person name="Tivey A."/>
            <person name="Sugano S."/>
            <person name="White B."/>
            <person name="Walker D."/>
            <person name="Woodward J.R."/>
            <person name="Winckler T."/>
            <person name="Tanaka Y."/>
            <person name="Shaulsky G."/>
            <person name="Schleicher M."/>
            <person name="Weinstock G.M."/>
            <person name="Rosenthal A."/>
            <person name="Cox E.C."/>
            <person name="Chisholm R.L."/>
            <person name="Gibbs R.A."/>
            <person name="Loomis W.F."/>
            <person name="Platzer M."/>
            <person name="Kay R.R."/>
            <person name="Williams J.G."/>
            <person name="Dear P.H."/>
            <person name="Noegel A.A."/>
            <person name="Barrell B.G."/>
            <person name="Kuspa A."/>
        </authorList>
    </citation>
    <scope>NUCLEOTIDE SEQUENCE [LARGE SCALE GENOMIC DNA]</scope>
    <source>
        <strain>AX4</strain>
    </source>
</reference>
<gene>
    <name type="ORF">DDB_G0268550</name>
</gene>
<sequence>MIENDNTFNKDEWEIIEKNYRKGGFSKISKAKKKNGIINGTIVNKKMIAIKKIKFDDKIQFNEVNNLELIKNKNKEMQISSIIDYFGYGIKGKNKLYIYLEFIEGKTIYELKKKKFPLNEKQISIILKKCLETMKFLHNNCNLIHMDLKCDNIILKPNNYDNNNNNNNNNNNNNNNNNNNSNINDDNNNSNSNINDDNNFDIKIIDYGLSQKIGDLKRDHYGTYLPDECILNNVSIVNYTFDVYSLGFISFELFYPTQFEIKPIKLTHIYEYVEKSQISPLFLNFIKKCIGRYLDIDVLEIHPFLNENYDNFENYFKFLKQTPLKRIKYRNGINGENDILRINNSTTITSEQFPNNSKMIEFGDDFNGIINVDYIANKKVVILNNPNYNIINLDFCFSNVEYICIKGIGVLEISKITHNSLETFIYEGEFKNDFILKPYLFTNTKHLILKNYKNYIRHRGIIPEGVTFLELSDSIGIEVIKTFIHLPKSIEELCFGCTEETLKQIERNLILQSINFFIINGKLMKFSKNNNLEYYE</sequence>
<evidence type="ECO:0000250" key="1">
    <source>
        <dbReference type="UniProtKB" id="P28523"/>
    </source>
</evidence>
<evidence type="ECO:0000250" key="2">
    <source>
        <dbReference type="UniProtKB" id="Q869N2"/>
    </source>
</evidence>
<evidence type="ECO:0000255" key="3">
    <source>
        <dbReference type="PROSITE-ProRule" id="PRU00159"/>
    </source>
</evidence>
<evidence type="ECO:0000255" key="4">
    <source>
        <dbReference type="PROSITE-ProRule" id="PRU10027"/>
    </source>
</evidence>
<evidence type="ECO:0000256" key="5">
    <source>
        <dbReference type="SAM" id="MobiDB-lite"/>
    </source>
</evidence>
<evidence type="ECO:0000312" key="6">
    <source>
        <dbReference type="EMBL" id="EAL73728.1"/>
    </source>
</evidence>
<feature type="chain" id="PRO_0000371253" description="Probable serine/threonine-protein kinase DDB_G0268550">
    <location>
        <begin position="1"/>
        <end position="536"/>
    </location>
</feature>
<feature type="domain" description="Protein kinase" evidence="3">
    <location>
        <begin position="14"/>
        <end position="305"/>
    </location>
</feature>
<feature type="region of interest" description="Disordered" evidence="5">
    <location>
        <begin position="161"/>
        <end position="192"/>
    </location>
</feature>
<feature type="active site" description="Proton acceptor" evidence="1 3 4">
    <location>
        <position position="147"/>
    </location>
</feature>
<feature type="binding site" evidence="1 3">
    <location>
        <begin position="20"/>
        <end position="28"/>
    </location>
    <ligand>
        <name>ATP</name>
        <dbReference type="ChEBI" id="CHEBI:30616"/>
    </ligand>
</feature>
<feature type="binding site" evidence="1 3">
    <location>
        <position position="51"/>
    </location>
    <ligand>
        <name>ATP</name>
        <dbReference type="ChEBI" id="CHEBI:30616"/>
    </ligand>
</feature>
<name>Y8550_DICDI</name>
<protein>
    <recommendedName>
        <fullName>Probable serine/threonine-protein kinase DDB_G0268550</fullName>
        <ecNumber>2.7.11.1</ecNumber>
    </recommendedName>
</protein>
<keyword id="KW-0067">ATP-binding</keyword>
<keyword id="KW-0418">Kinase</keyword>
<keyword id="KW-0460">Magnesium</keyword>
<keyword id="KW-0479">Metal-binding</keyword>
<keyword id="KW-0547">Nucleotide-binding</keyword>
<keyword id="KW-1185">Reference proteome</keyword>
<keyword id="KW-0723">Serine/threonine-protein kinase</keyword>
<keyword id="KW-0808">Transferase</keyword>
<organism>
    <name type="scientific">Dictyostelium discoideum</name>
    <name type="common">Social amoeba</name>
    <dbReference type="NCBI Taxonomy" id="44689"/>
    <lineage>
        <taxon>Eukaryota</taxon>
        <taxon>Amoebozoa</taxon>
        <taxon>Evosea</taxon>
        <taxon>Eumycetozoa</taxon>
        <taxon>Dictyostelia</taxon>
        <taxon>Dictyosteliales</taxon>
        <taxon>Dictyosteliaceae</taxon>
        <taxon>Dictyostelium</taxon>
    </lineage>
</organism>